<sequence>MPPPRTREGRDRRDHHRAPSEEEALEKWDWNCPETRRLLEDAFFREEDYIRQGSEECQKFWTFFERLQRFQNLKTSRKEEKDPGQPKHSIPALADLPRTYDPRYRINLSVLGPATRGSQGLGRHLPAERVAEFRRALLHYLDFGQKQAFGRLAKLQRERAALPIAQYGNRILQTLKEHQVVVVAGDTGCGKSTQVPQYLLAAGFSHVACTQPRRIACISLAKRVGFESLSQYGSQVGYQIRFESTRSAATKIVFLTVGLLLRQIQREPSLPQYEVLIVDEVHERHLHNDFLLGVLQRLLPTRPDLKVILMSATINISLFSSYFSNAPVVQVPGRLFPITVVYQPQEAEPTTSKSEKLDPRPFLRVLESIDHKYPPEERGDLLVFLSGMAEISAVLEAAQTYASHTQRWVVLPLHSALSVADQDKVFDVAPPGVRKCILSTNIAETSVTIDGIRFVVDSGKVKEMSYDPQAKLQRLQEFWISQASAEQRKGRAGRTGPGVCFRLYAESDYDAFAPYPVPEIRRVALDSLVLQMKSMSVGDPRTFPFIEPPPPASLETAILYLRDQGALDSSEALTPIGSLLAQLPVDVVIGKMLILGSMFSLVEPVLTIAAALSVQSPFTRSAQSSPECAAARRPLESDQGDPFTLFNVFNAWVQVKSERSRNSRKWCRRRGIEEHRLYEMANLRRQFKELLEDHGLLAGAQAAQVGDSYSRLQQRRERRALHQLKRQHEEGAGRRRKVLRLQEEQDGGSSDEDRAGPAPPGASDGVDIQDVKFKLRHDLAQLQAAASSAQDLSREQLALLKLVLGRGLYPQLAVPDAFNSSRKDSDQIFHTQAKQGAVLHPTCVFAGSPEVLHAQELEASNCDGSRDDKDKMSSKHQLLSFVSLLETNKPYLVNCVRIPALQSLLLFSRSLDTNGDCSRLVADGWLELQLADSESAIRLLAASLRLRARWESALDRQLAHQAQQQLEEEEEDTPVSPKEVATLSKELLQFTASKIPYSLRRLTGLEVQNMYVGPQTIPATPHLPGLFGSSTLSPHPTKGGYAVTDFLTYNCLTNDTDLYSDCLRTFWTCPHCGLHAPLTPLERIAHENTCPQAPQDGPPGAEEAALETLQKTSVLQRPYHCEACGKDFLFTPTEVLRHRKQHV</sequence>
<proteinExistence type="evidence at protein level"/>
<comment type="function">
    <text evidence="4 7">Probable ATP-binding RNA helicase required for nonsense-mediated decay (NMD) degradation of mRNA transcripts containing premature stop codons (PubMed:25220460, PubMed:33205750). Promotes the phosphorylation of UPF1 along with its interaction with key NMD pathway proteins UPF2 and EIF4A3 (PubMed:25220460). Interaction with the RUVBL1-RUVBL2 complex results in loss of nucleotide binding ability and ATP hydrolysis of the complex (PubMed:33205750). Negatively regulates the nucleotide binding ability and ATP hydrolysis of the RUVBL1-RUVBL2 complex via induction of N-terminus conformation changes of the RUVBL2 subunits (PubMed:33205750).</text>
</comment>
<comment type="catalytic activity">
    <reaction>
        <text>ATP + H2O = ADP + phosphate + H(+)</text>
        <dbReference type="Rhea" id="RHEA:13065"/>
        <dbReference type="ChEBI" id="CHEBI:15377"/>
        <dbReference type="ChEBI" id="CHEBI:15378"/>
        <dbReference type="ChEBI" id="CHEBI:30616"/>
        <dbReference type="ChEBI" id="CHEBI:43474"/>
        <dbReference type="ChEBI" id="CHEBI:456216"/>
        <dbReference type="EC" id="3.6.4.13"/>
    </reaction>
</comment>
<comment type="subunit">
    <text evidence="4 5 7">Forms a complex with RUVBL1 and RUVBL2 (PubMed:33205750). Part of a complex composed of SMG1, DHX34 and UPF1; within the complex DHX34 acts as a scaffolding protein to facilitate SMG1 phosphorylation of UPF1 (PubMed:26841701). Interacts with UPF1, MOV10, EIF4A3, XRN2, SMG6, SMG7, SMG9, UPF3A, UPF3B, CASC3/MLN51, XRN1, DIS3 and DCP1A; the interactions are RNA-independent (PubMed:25220460). Interacts with NCBP1/CPB80; the interaction is RNA-dependent (PubMed:25220460). Interacts (via C-terminus) with SMG1; the interaction is RNA-independent (PubMed:25220460, PubMed:26841701).</text>
</comment>
<comment type="interaction">
    <interactant intactId="EBI-719374">
        <id>Q14147</id>
    </interactant>
    <interactant intactId="EBI-2802782">
        <id>Q6NVV7</id>
        <label>CDPF1</label>
    </interactant>
    <organismsDiffer>false</organismsDiffer>
    <experiments>3</experiments>
</comment>
<comment type="tissue specificity">
    <text evidence="6">Expressed in whole blood, testis and spleen. Also expressed in the brain.</text>
</comment>
<comment type="similarity">
    <text evidence="8">Belongs to the DEAD box helicase family. DEAH subfamily.</text>
</comment>
<comment type="sequence caution" evidence="8">
    <conflict type="miscellaneous discrepancy">
        <sequence resource="EMBL-CDS" id="BAA09483"/>
    </conflict>
    <text>Aberrant splicing.</text>
</comment>
<comment type="sequence caution" evidence="8">
    <conflict type="erroneous initiation">
        <sequence resource="EMBL-CDS" id="BAG60050"/>
    </conflict>
    <text>Truncated N-terminus.</text>
</comment>
<dbReference type="EC" id="3.6.4.13"/>
<dbReference type="EMBL" id="D50924">
    <property type="protein sequence ID" value="BAA09483.2"/>
    <property type="status" value="ALT_SEQ"/>
    <property type="molecule type" value="mRNA"/>
</dbReference>
<dbReference type="EMBL" id="AC008754">
    <property type="status" value="NOT_ANNOTATED_CDS"/>
    <property type="molecule type" value="Genomic_DNA"/>
</dbReference>
<dbReference type="EMBL" id="AK297692">
    <property type="protein sequence ID" value="BAG60050.1"/>
    <property type="status" value="ALT_INIT"/>
    <property type="molecule type" value="mRNA"/>
</dbReference>
<dbReference type="CCDS" id="CCDS12700.1"/>
<dbReference type="RefSeq" id="NP_055496.2">
    <property type="nucleotide sequence ID" value="NM_014681.5"/>
</dbReference>
<dbReference type="RefSeq" id="XP_005259500.1">
    <property type="nucleotide sequence ID" value="XM_005259443.4"/>
</dbReference>
<dbReference type="RefSeq" id="XP_011525852.1">
    <property type="nucleotide sequence ID" value="XM_011527550.3"/>
</dbReference>
<dbReference type="RefSeq" id="XP_011525853.1">
    <property type="nucleotide sequence ID" value="XM_011527551.3"/>
</dbReference>
<dbReference type="RefSeq" id="XP_016883013.1">
    <property type="nucleotide sequence ID" value="XM_017027524.1"/>
</dbReference>
<dbReference type="RefSeq" id="XP_047295715.1">
    <property type="nucleotide sequence ID" value="XM_047439759.1"/>
</dbReference>
<dbReference type="RefSeq" id="XP_047295716.1">
    <property type="nucleotide sequence ID" value="XM_047439760.1"/>
</dbReference>
<dbReference type="EMDB" id="EMD-3278"/>
<dbReference type="EMDB" id="EMD-3279"/>
<dbReference type="SMR" id="Q14147"/>
<dbReference type="BioGRID" id="115056">
    <property type="interactions" value="37"/>
</dbReference>
<dbReference type="FunCoup" id="Q14147">
    <property type="interactions" value="423"/>
</dbReference>
<dbReference type="IntAct" id="Q14147">
    <property type="interactions" value="25"/>
</dbReference>
<dbReference type="MINT" id="Q14147"/>
<dbReference type="STRING" id="9606.ENSP00000331907"/>
<dbReference type="iPTMnet" id="Q14147"/>
<dbReference type="PhosphoSitePlus" id="Q14147"/>
<dbReference type="BioMuta" id="DHX34"/>
<dbReference type="DMDM" id="311033371"/>
<dbReference type="jPOST" id="Q14147"/>
<dbReference type="MassIVE" id="Q14147"/>
<dbReference type="PaxDb" id="9606-ENSP00000331907"/>
<dbReference type="PeptideAtlas" id="Q14147"/>
<dbReference type="ProteomicsDB" id="59851"/>
<dbReference type="Pumba" id="Q14147"/>
<dbReference type="Antibodypedia" id="31552">
    <property type="antibodies" value="74 antibodies from 15 providers"/>
</dbReference>
<dbReference type="DNASU" id="9704"/>
<dbReference type="Ensembl" id="ENST00000328771.9">
    <property type="protein sequence ID" value="ENSP00000331907.4"/>
    <property type="gene ID" value="ENSG00000134815.20"/>
</dbReference>
<dbReference type="Ensembl" id="ENST00000718252.1">
    <property type="protein sequence ID" value="ENSP00000520696.1"/>
    <property type="gene ID" value="ENSG00000134815.20"/>
</dbReference>
<dbReference type="GeneID" id="9704"/>
<dbReference type="KEGG" id="hsa:9704"/>
<dbReference type="MANE-Select" id="ENST00000328771.9">
    <property type="protein sequence ID" value="ENSP00000331907.4"/>
    <property type="RefSeq nucleotide sequence ID" value="NM_014681.6"/>
    <property type="RefSeq protein sequence ID" value="NP_055496.2"/>
</dbReference>
<dbReference type="UCSC" id="uc010xyn.2">
    <property type="organism name" value="human"/>
</dbReference>
<dbReference type="AGR" id="HGNC:16719"/>
<dbReference type="CTD" id="9704"/>
<dbReference type="DisGeNET" id="9704"/>
<dbReference type="GeneCards" id="DHX34"/>
<dbReference type="HGNC" id="HGNC:16719">
    <property type="gene designation" value="DHX34"/>
</dbReference>
<dbReference type="HPA" id="ENSG00000134815">
    <property type="expression patterns" value="Low tissue specificity"/>
</dbReference>
<dbReference type="MIM" id="615475">
    <property type="type" value="gene"/>
</dbReference>
<dbReference type="neXtProt" id="NX_Q14147"/>
<dbReference type="OpenTargets" id="ENSG00000134815"/>
<dbReference type="PharmGKB" id="PA27221"/>
<dbReference type="VEuPathDB" id="HostDB:ENSG00000134815"/>
<dbReference type="eggNOG" id="KOG0922">
    <property type="taxonomic scope" value="Eukaryota"/>
</dbReference>
<dbReference type="GeneTree" id="ENSGT00940000158721"/>
<dbReference type="HOGENOM" id="CLU_001832_5_2_1"/>
<dbReference type="InParanoid" id="Q14147"/>
<dbReference type="OMA" id="CIFANSP"/>
<dbReference type="OrthoDB" id="3363059at2759"/>
<dbReference type="PAN-GO" id="Q14147">
    <property type="GO annotations" value="3 GO annotations based on evolutionary models"/>
</dbReference>
<dbReference type="PhylomeDB" id="Q14147"/>
<dbReference type="TreeFam" id="TF313217"/>
<dbReference type="BRENDA" id="3.6.4.13">
    <property type="organism ID" value="2681"/>
</dbReference>
<dbReference type="PathwayCommons" id="Q14147"/>
<dbReference type="SignaLink" id="Q14147"/>
<dbReference type="BioGRID-ORCS" id="9704">
    <property type="hits" value="16 hits in 1157 CRISPR screens"/>
</dbReference>
<dbReference type="ChiTaRS" id="DHX34">
    <property type="organism name" value="human"/>
</dbReference>
<dbReference type="GenomeRNAi" id="9704"/>
<dbReference type="Pharos" id="Q14147">
    <property type="development level" value="Tbio"/>
</dbReference>
<dbReference type="PRO" id="PR:Q14147"/>
<dbReference type="Proteomes" id="UP000005640">
    <property type="component" value="Chromosome 19"/>
</dbReference>
<dbReference type="RNAct" id="Q14147">
    <property type="molecule type" value="protein"/>
</dbReference>
<dbReference type="Bgee" id="ENSG00000134815">
    <property type="expression patterns" value="Expressed in right testis and 148 other cell types or tissues"/>
</dbReference>
<dbReference type="ExpressionAtlas" id="Q14147">
    <property type="expression patterns" value="baseline and differential"/>
</dbReference>
<dbReference type="GO" id="GO:0016020">
    <property type="term" value="C:membrane"/>
    <property type="evidence" value="ECO:0007005"/>
    <property type="project" value="UniProtKB"/>
</dbReference>
<dbReference type="GO" id="GO:0005524">
    <property type="term" value="F:ATP binding"/>
    <property type="evidence" value="ECO:0007669"/>
    <property type="project" value="UniProtKB-KW"/>
</dbReference>
<dbReference type="GO" id="GO:0016887">
    <property type="term" value="F:ATP hydrolysis activity"/>
    <property type="evidence" value="ECO:0000315"/>
    <property type="project" value="UniProtKB"/>
</dbReference>
<dbReference type="GO" id="GO:0004386">
    <property type="term" value="F:helicase activity"/>
    <property type="evidence" value="ECO:0000318"/>
    <property type="project" value="GO_Central"/>
</dbReference>
<dbReference type="GO" id="GO:0044877">
    <property type="term" value="F:protein-containing complex binding"/>
    <property type="evidence" value="ECO:0000353"/>
    <property type="project" value="UniProtKB"/>
</dbReference>
<dbReference type="GO" id="GO:0003723">
    <property type="term" value="F:RNA binding"/>
    <property type="evidence" value="ECO:0007005"/>
    <property type="project" value="UniProtKB"/>
</dbReference>
<dbReference type="GO" id="GO:0003724">
    <property type="term" value="F:RNA helicase activity"/>
    <property type="evidence" value="ECO:0007669"/>
    <property type="project" value="UniProtKB-EC"/>
</dbReference>
<dbReference type="GO" id="GO:2000623">
    <property type="term" value="P:negative regulation of nuclear-transcribed mRNA catabolic process, nonsense-mediated decay"/>
    <property type="evidence" value="ECO:0000315"/>
    <property type="project" value="UniProtKB"/>
</dbReference>
<dbReference type="GO" id="GO:0000956">
    <property type="term" value="P:nuclear-transcribed mRNA catabolic process"/>
    <property type="evidence" value="ECO:0000315"/>
    <property type="project" value="UniProtKB"/>
</dbReference>
<dbReference type="GO" id="GO:0042327">
    <property type="term" value="P:positive regulation of phosphorylation"/>
    <property type="evidence" value="ECO:0000315"/>
    <property type="project" value="UniProtKB"/>
</dbReference>
<dbReference type="CDD" id="cd17979">
    <property type="entry name" value="DEXHc_DHX34"/>
    <property type="match status" value="1"/>
</dbReference>
<dbReference type="CDD" id="cd18791">
    <property type="entry name" value="SF2_C_RHA"/>
    <property type="match status" value="1"/>
</dbReference>
<dbReference type="FunFam" id="1.20.120.1080:FF:000056">
    <property type="entry name" value="probable ATP-dependent RNA helicase DHX34"/>
    <property type="match status" value="1"/>
</dbReference>
<dbReference type="FunFam" id="3.40.50.300:FF:000540">
    <property type="entry name" value="probable ATP-dependent RNA helicase DHX34"/>
    <property type="match status" value="1"/>
</dbReference>
<dbReference type="FunFam" id="3.40.50.300:FF:000725">
    <property type="entry name" value="probable ATP-dependent RNA helicase DHX34"/>
    <property type="match status" value="1"/>
</dbReference>
<dbReference type="Gene3D" id="1.20.120.1080">
    <property type="match status" value="1"/>
</dbReference>
<dbReference type="Gene3D" id="3.40.50.300">
    <property type="entry name" value="P-loop containing nucleotide triphosphate hydrolases"/>
    <property type="match status" value="2"/>
</dbReference>
<dbReference type="InterPro" id="IPR011709">
    <property type="entry name" value="DEAD-box_helicase_OB_fold"/>
</dbReference>
<dbReference type="InterPro" id="IPR011545">
    <property type="entry name" value="DEAD/DEAH_box_helicase_dom"/>
</dbReference>
<dbReference type="InterPro" id="IPR056382">
    <property type="entry name" value="DHX34_Znf-C2H2"/>
</dbReference>
<dbReference type="InterPro" id="IPR048333">
    <property type="entry name" value="HA2_WH"/>
</dbReference>
<dbReference type="InterPro" id="IPR007502">
    <property type="entry name" value="Helicase-assoc_dom"/>
</dbReference>
<dbReference type="InterPro" id="IPR014001">
    <property type="entry name" value="Helicase_ATP-bd"/>
</dbReference>
<dbReference type="InterPro" id="IPR001650">
    <property type="entry name" value="Helicase_C-like"/>
</dbReference>
<dbReference type="InterPro" id="IPR027417">
    <property type="entry name" value="P-loop_NTPase"/>
</dbReference>
<dbReference type="PANTHER" id="PTHR18934">
    <property type="entry name" value="ATP-DEPENDENT RNA HELICASE"/>
    <property type="match status" value="1"/>
</dbReference>
<dbReference type="PANTHER" id="PTHR18934:SF221">
    <property type="entry name" value="ATP-DEPENDENT RNA HELICASE DHX34-RELATED"/>
    <property type="match status" value="1"/>
</dbReference>
<dbReference type="Pfam" id="PF00270">
    <property type="entry name" value="DEAD"/>
    <property type="match status" value="1"/>
</dbReference>
<dbReference type="Pfam" id="PF21010">
    <property type="entry name" value="HA2_C"/>
    <property type="match status" value="1"/>
</dbReference>
<dbReference type="Pfam" id="PF04408">
    <property type="entry name" value="HA2_N"/>
    <property type="match status" value="1"/>
</dbReference>
<dbReference type="Pfam" id="PF00271">
    <property type="entry name" value="Helicase_C"/>
    <property type="match status" value="1"/>
</dbReference>
<dbReference type="Pfam" id="PF07717">
    <property type="entry name" value="OB_NTP_bind"/>
    <property type="match status" value="1"/>
</dbReference>
<dbReference type="Pfam" id="PF24485">
    <property type="entry name" value="zf-C2H2_DHX34"/>
    <property type="match status" value="1"/>
</dbReference>
<dbReference type="SMART" id="SM00487">
    <property type="entry name" value="DEXDc"/>
    <property type="match status" value="1"/>
</dbReference>
<dbReference type="SMART" id="SM00847">
    <property type="entry name" value="HA2"/>
    <property type="match status" value="1"/>
</dbReference>
<dbReference type="SMART" id="SM00490">
    <property type="entry name" value="HELICc"/>
    <property type="match status" value="1"/>
</dbReference>
<dbReference type="SUPFAM" id="SSF52540">
    <property type="entry name" value="P-loop containing nucleoside triphosphate hydrolases"/>
    <property type="match status" value="1"/>
</dbReference>
<dbReference type="PROSITE" id="PS51192">
    <property type="entry name" value="HELICASE_ATP_BIND_1"/>
    <property type="match status" value="1"/>
</dbReference>
<dbReference type="PROSITE" id="PS51194">
    <property type="entry name" value="HELICASE_CTER"/>
    <property type="match status" value="1"/>
</dbReference>
<keyword id="KW-0067">ATP-binding</keyword>
<keyword id="KW-0347">Helicase</keyword>
<keyword id="KW-0378">Hydrolase</keyword>
<keyword id="KW-0547">Nucleotide-binding</keyword>
<keyword id="KW-0597">Phosphoprotein</keyword>
<keyword id="KW-1267">Proteomics identification</keyword>
<keyword id="KW-1185">Reference proteome</keyword>
<keyword id="KW-0694">RNA-binding</keyword>
<accession>Q14147</accession>
<accession>B4DMY8</accession>
<gene>
    <name evidence="9" type="primary">DHX34</name>
    <name evidence="9" type="synonym">DDX34</name>
    <name type="synonym">KIAA0134</name>
</gene>
<name>DHX34_HUMAN</name>
<reference key="1">
    <citation type="journal article" date="1995" name="DNA Res.">
        <title>Prediction of the coding sequences of unidentified human genes. IV. The coding sequences of 40 new genes (KIAA0121-KIAA0160) deduced by analysis of cDNA clones from human cell line KG-1.</title>
        <authorList>
            <person name="Nagase T."/>
            <person name="Seki N."/>
            <person name="Tanaka A."/>
            <person name="Ishikawa K."/>
            <person name="Nomura N."/>
        </authorList>
    </citation>
    <scope>NUCLEOTIDE SEQUENCE [LARGE SCALE MRNA]</scope>
    <source>
        <tissue>Bone marrow</tissue>
    </source>
</reference>
<reference key="2">
    <citation type="journal article" date="2004" name="Nature">
        <title>The DNA sequence and biology of human chromosome 19.</title>
        <authorList>
            <person name="Grimwood J."/>
            <person name="Gordon L.A."/>
            <person name="Olsen A.S."/>
            <person name="Terry A."/>
            <person name="Schmutz J."/>
            <person name="Lamerdin J.E."/>
            <person name="Hellsten U."/>
            <person name="Goodstein D."/>
            <person name="Couronne O."/>
            <person name="Tran-Gyamfi M."/>
            <person name="Aerts A."/>
            <person name="Altherr M."/>
            <person name="Ashworth L."/>
            <person name="Bajorek E."/>
            <person name="Black S."/>
            <person name="Branscomb E."/>
            <person name="Caenepeel S."/>
            <person name="Carrano A.V."/>
            <person name="Caoile C."/>
            <person name="Chan Y.M."/>
            <person name="Christensen M."/>
            <person name="Cleland C.A."/>
            <person name="Copeland A."/>
            <person name="Dalin E."/>
            <person name="Dehal P."/>
            <person name="Denys M."/>
            <person name="Detter J.C."/>
            <person name="Escobar J."/>
            <person name="Flowers D."/>
            <person name="Fotopulos D."/>
            <person name="Garcia C."/>
            <person name="Georgescu A.M."/>
            <person name="Glavina T."/>
            <person name="Gomez M."/>
            <person name="Gonzales E."/>
            <person name="Groza M."/>
            <person name="Hammon N."/>
            <person name="Hawkins T."/>
            <person name="Haydu L."/>
            <person name="Ho I."/>
            <person name="Huang W."/>
            <person name="Israni S."/>
            <person name="Jett J."/>
            <person name="Kadner K."/>
            <person name="Kimball H."/>
            <person name="Kobayashi A."/>
            <person name="Larionov V."/>
            <person name="Leem S.-H."/>
            <person name="Lopez F."/>
            <person name="Lou Y."/>
            <person name="Lowry S."/>
            <person name="Malfatti S."/>
            <person name="Martinez D."/>
            <person name="McCready P.M."/>
            <person name="Medina C."/>
            <person name="Morgan J."/>
            <person name="Nelson K."/>
            <person name="Nolan M."/>
            <person name="Ovcharenko I."/>
            <person name="Pitluck S."/>
            <person name="Pollard M."/>
            <person name="Popkie A.P."/>
            <person name="Predki P."/>
            <person name="Quan G."/>
            <person name="Ramirez L."/>
            <person name="Rash S."/>
            <person name="Retterer J."/>
            <person name="Rodriguez A."/>
            <person name="Rogers S."/>
            <person name="Salamov A."/>
            <person name="Salazar A."/>
            <person name="She X."/>
            <person name="Smith D."/>
            <person name="Slezak T."/>
            <person name="Solovyev V."/>
            <person name="Thayer N."/>
            <person name="Tice H."/>
            <person name="Tsai M."/>
            <person name="Ustaszewska A."/>
            <person name="Vo N."/>
            <person name="Wagner M."/>
            <person name="Wheeler J."/>
            <person name="Wu K."/>
            <person name="Xie G."/>
            <person name="Yang J."/>
            <person name="Dubchak I."/>
            <person name="Furey T.S."/>
            <person name="DeJong P."/>
            <person name="Dickson M."/>
            <person name="Gordon D."/>
            <person name="Eichler E.E."/>
            <person name="Pennacchio L.A."/>
            <person name="Richardson P."/>
            <person name="Stubbs L."/>
            <person name="Rokhsar D.S."/>
            <person name="Myers R.M."/>
            <person name="Rubin E.M."/>
            <person name="Lucas S.M."/>
        </authorList>
    </citation>
    <scope>NUCLEOTIDE SEQUENCE [LARGE SCALE GENOMIC DNA]</scope>
</reference>
<reference key="3">
    <citation type="journal article" date="2004" name="Nat. Genet.">
        <title>Complete sequencing and characterization of 21,243 full-length human cDNAs.</title>
        <authorList>
            <person name="Ota T."/>
            <person name="Suzuki Y."/>
            <person name="Nishikawa T."/>
            <person name="Otsuki T."/>
            <person name="Sugiyama T."/>
            <person name="Irie R."/>
            <person name="Wakamatsu A."/>
            <person name="Hayashi K."/>
            <person name="Sato H."/>
            <person name="Nagai K."/>
            <person name="Kimura K."/>
            <person name="Makita H."/>
            <person name="Sekine M."/>
            <person name="Obayashi M."/>
            <person name="Nishi T."/>
            <person name="Shibahara T."/>
            <person name="Tanaka T."/>
            <person name="Ishii S."/>
            <person name="Yamamoto J."/>
            <person name="Saito K."/>
            <person name="Kawai Y."/>
            <person name="Isono Y."/>
            <person name="Nakamura Y."/>
            <person name="Nagahari K."/>
            <person name="Murakami K."/>
            <person name="Yasuda T."/>
            <person name="Iwayanagi T."/>
            <person name="Wagatsuma M."/>
            <person name="Shiratori A."/>
            <person name="Sudo H."/>
            <person name="Hosoiri T."/>
            <person name="Kaku Y."/>
            <person name="Kodaira H."/>
            <person name="Kondo H."/>
            <person name="Sugawara M."/>
            <person name="Takahashi M."/>
            <person name="Kanda K."/>
            <person name="Yokoi T."/>
            <person name="Furuya T."/>
            <person name="Kikkawa E."/>
            <person name="Omura Y."/>
            <person name="Abe K."/>
            <person name="Kamihara K."/>
            <person name="Katsuta N."/>
            <person name="Sato K."/>
            <person name="Tanikawa M."/>
            <person name="Yamazaki M."/>
            <person name="Ninomiya K."/>
            <person name="Ishibashi T."/>
            <person name="Yamashita H."/>
            <person name="Murakawa K."/>
            <person name="Fujimori K."/>
            <person name="Tanai H."/>
            <person name="Kimata M."/>
            <person name="Watanabe M."/>
            <person name="Hiraoka S."/>
            <person name="Chiba Y."/>
            <person name="Ishida S."/>
            <person name="Ono Y."/>
            <person name="Takiguchi S."/>
            <person name="Watanabe S."/>
            <person name="Yosida M."/>
            <person name="Hotuta T."/>
            <person name="Kusano J."/>
            <person name="Kanehori K."/>
            <person name="Takahashi-Fujii A."/>
            <person name="Hara H."/>
            <person name="Tanase T.-O."/>
            <person name="Nomura Y."/>
            <person name="Togiya S."/>
            <person name="Komai F."/>
            <person name="Hara R."/>
            <person name="Takeuchi K."/>
            <person name="Arita M."/>
            <person name="Imose N."/>
            <person name="Musashino K."/>
            <person name="Yuuki H."/>
            <person name="Oshima A."/>
            <person name="Sasaki N."/>
            <person name="Aotsuka S."/>
            <person name="Yoshikawa Y."/>
            <person name="Matsunawa H."/>
            <person name="Ichihara T."/>
            <person name="Shiohata N."/>
            <person name="Sano S."/>
            <person name="Moriya S."/>
            <person name="Momiyama H."/>
            <person name="Satoh N."/>
            <person name="Takami S."/>
            <person name="Terashima Y."/>
            <person name="Suzuki O."/>
            <person name="Nakagawa S."/>
            <person name="Senoh A."/>
            <person name="Mizoguchi H."/>
            <person name="Goto Y."/>
            <person name="Shimizu F."/>
            <person name="Wakebe H."/>
            <person name="Hishigaki H."/>
            <person name="Watanabe T."/>
            <person name="Sugiyama A."/>
            <person name="Takemoto M."/>
            <person name="Kawakami B."/>
            <person name="Yamazaki M."/>
            <person name="Watanabe K."/>
            <person name="Kumagai A."/>
            <person name="Itakura S."/>
            <person name="Fukuzumi Y."/>
            <person name="Fujimori Y."/>
            <person name="Komiyama M."/>
            <person name="Tashiro H."/>
            <person name="Tanigami A."/>
            <person name="Fujiwara T."/>
            <person name="Ono T."/>
            <person name="Yamada K."/>
            <person name="Fujii Y."/>
            <person name="Ozaki K."/>
            <person name="Hirao M."/>
            <person name="Ohmori Y."/>
            <person name="Kawabata A."/>
            <person name="Hikiji T."/>
            <person name="Kobatake N."/>
            <person name="Inagaki H."/>
            <person name="Ikema Y."/>
            <person name="Okamoto S."/>
            <person name="Okitani R."/>
            <person name="Kawakami T."/>
            <person name="Noguchi S."/>
            <person name="Itoh T."/>
            <person name="Shigeta K."/>
            <person name="Senba T."/>
            <person name="Matsumura K."/>
            <person name="Nakajima Y."/>
            <person name="Mizuno T."/>
            <person name="Morinaga M."/>
            <person name="Sasaki M."/>
            <person name="Togashi T."/>
            <person name="Oyama M."/>
            <person name="Hata H."/>
            <person name="Watanabe M."/>
            <person name="Komatsu T."/>
            <person name="Mizushima-Sugano J."/>
            <person name="Satoh T."/>
            <person name="Shirai Y."/>
            <person name="Takahashi Y."/>
            <person name="Nakagawa K."/>
            <person name="Okumura K."/>
            <person name="Nagase T."/>
            <person name="Nomura N."/>
            <person name="Kikuchi H."/>
            <person name="Masuho Y."/>
            <person name="Yamashita R."/>
            <person name="Nakai K."/>
            <person name="Yada T."/>
            <person name="Nakamura Y."/>
            <person name="Ohara O."/>
            <person name="Isogai T."/>
            <person name="Sugano S."/>
        </authorList>
    </citation>
    <scope>NUCLEOTIDE SEQUENCE [LARGE SCALE MRNA] OF 499-1143</scope>
    <source>
        <tissue>Lung</tissue>
    </source>
</reference>
<reference key="4">
    <citation type="journal article" date="2008" name="Proc. Natl. Acad. Sci. U.S.A.">
        <title>A quantitative atlas of mitotic phosphorylation.</title>
        <authorList>
            <person name="Dephoure N."/>
            <person name="Zhou C."/>
            <person name="Villen J."/>
            <person name="Beausoleil S.A."/>
            <person name="Bakalarski C.E."/>
            <person name="Elledge S.J."/>
            <person name="Gygi S.P."/>
        </authorList>
    </citation>
    <scope>PHOSPHORYLATION [LARGE SCALE ANALYSIS] AT SER-749 AND SER-750</scope>
    <scope>IDENTIFICATION BY MASS SPECTROMETRY [LARGE SCALE ANALYSIS]</scope>
    <source>
        <tissue>Cervix carcinoma</tissue>
    </source>
</reference>
<reference key="5">
    <citation type="journal article" date="2009" name="Sci. Signal.">
        <title>Quantitative phosphoproteomic analysis of T cell receptor signaling reveals system-wide modulation of protein-protein interactions.</title>
        <authorList>
            <person name="Mayya V."/>
            <person name="Lundgren D.H."/>
            <person name="Hwang S.-I."/>
            <person name="Rezaul K."/>
            <person name="Wu L."/>
            <person name="Eng J.K."/>
            <person name="Rodionov V."/>
            <person name="Han D.K."/>
        </authorList>
    </citation>
    <scope>PHOSPHORYLATION [LARGE SCALE ANALYSIS] AT SER-749 AND SER-750</scope>
    <scope>IDENTIFICATION BY MASS SPECTROMETRY [LARGE SCALE ANALYSIS]</scope>
    <source>
        <tissue>Leukemic T-cell</tissue>
    </source>
</reference>
<reference key="6">
    <citation type="journal article" date="2010" name="Sci. Signal.">
        <title>Quantitative phosphoproteomics reveals widespread full phosphorylation site occupancy during mitosis.</title>
        <authorList>
            <person name="Olsen J.V."/>
            <person name="Vermeulen M."/>
            <person name="Santamaria A."/>
            <person name="Kumar C."/>
            <person name="Miller M.L."/>
            <person name="Jensen L.J."/>
            <person name="Gnad F."/>
            <person name="Cox J."/>
            <person name="Jensen T.S."/>
            <person name="Nigg E.A."/>
            <person name="Brunak S."/>
            <person name="Mann M."/>
        </authorList>
    </citation>
    <scope>IDENTIFICATION BY MASS SPECTROMETRY [LARGE SCALE ANALYSIS]</scope>
    <source>
        <tissue>Cervix carcinoma</tissue>
    </source>
</reference>
<reference key="7">
    <citation type="journal article" date="2011" name="Sci. Signal.">
        <title>System-wide temporal characterization of the proteome and phosphoproteome of human embryonic stem cell differentiation.</title>
        <authorList>
            <person name="Rigbolt K.T."/>
            <person name="Prokhorova T.A."/>
            <person name="Akimov V."/>
            <person name="Henningsen J."/>
            <person name="Johansen P.T."/>
            <person name="Kratchmarova I."/>
            <person name="Kassem M."/>
            <person name="Mann M."/>
            <person name="Olsen J.V."/>
            <person name="Blagoev B."/>
        </authorList>
    </citation>
    <scope>PHOSPHORYLATION [LARGE SCALE ANALYSIS] AT SER-749 AND SER-750</scope>
    <scope>IDENTIFICATION BY MASS SPECTROMETRY [LARGE SCALE ANALYSIS]</scope>
</reference>
<reference key="8">
    <citation type="journal article" date="2014" name="Cell Rep.">
        <title>The RNA helicase DHX34 activates NMD by promoting a transition from the surveillance to the decay-inducing complex.</title>
        <authorList>
            <person name="Hug N."/>
            <person name="Caceres J.F."/>
        </authorList>
    </citation>
    <scope>FUNCTION</scope>
    <scope>INTERACTION WITH UPF1; MOV10; EIF4A3; XRN2; SMG1; SMG6; SMG7; SMG9; UPF3A; UPF3B; CASC3; XRN1; DIS3; DCP1A AND NCBP1</scope>
    <scope>MUTAGENESIS OF LYS-191 AND ASP-279</scope>
</reference>
<reference key="9">
    <citation type="journal article" date="2014" name="J. Proteomics">
        <title>An enzyme assisted RP-RPLC approach for in-depth analysis of human liver phosphoproteome.</title>
        <authorList>
            <person name="Bian Y."/>
            <person name="Song C."/>
            <person name="Cheng K."/>
            <person name="Dong M."/>
            <person name="Wang F."/>
            <person name="Huang J."/>
            <person name="Sun D."/>
            <person name="Wang L."/>
            <person name="Ye M."/>
            <person name="Zou H."/>
        </authorList>
    </citation>
    <scope>PHOSPHORYLATION [LARGE SCALE ANALYSIS] AT SER-749 AND SER-750</scope>
    <scope>IDENTIFICATION BY MASS SPECTROMETRY [LARGE SCALE ANALYSIS]</scope>
    <source>
        <tissue>Liver</tissue>
    </source>
</reference>
<reference key="10">
    <citation type="journal article" date="2016" name="Nat. Commun.">
        <title>The RNA helicase DHX34 functions as a scaffold for SMG1-mediated UPF1 phosphorylation.</title>
        <authorList>
            <person name="Melero R."/>
            <person name="Hug N."/>
            <person name="Lopez-Perrote A."/>
            <person name="Yamashita A."/>
            <person name="Caceres J.F."/>
            <person name="Llorca O."/>
        </authorList>
    </citation>
    <scope>IDENTIFICATION IN A COMPLEX WITH UPF1 AND SMG1</scope>
    <scope>INTERACTION WITH UPF1 AND SMG1</scope>
    <scope>MUTAGENESIS OF ASP-279</scope>
</reference>
<reference key="11">
    <citation type="journal article" date="2020" name="Elife">
        <title>Regulation of RUVBL1-RUVBL2 AAA-ATPases by the nonsense-mediated mRNA decay factor DHX34, as evidenced by Cryo-EM.</title>
        <authorList>
            <person name="Lopez-Perrote A."/>
            <person name="Hug N."/>
            <person name="Gonzalez-Corpas A."/>
            <person name="Rodriguez C.F."/>
            <person name="Serna M."/>
            <person name="Garcia-Martin C."/>
            <person name="Boskovic J."/>
            <person name="Fernandez-Leiro R."/>
            <person name="Caceres J.F."/>
            <person name="Llorca O."/>
        </authorList>
    </citation>
    <scope>FUNCTION</scope>
    <scope>INTERACTION WITH RUVBL1 AND RUVBL2</scope>
    <scope>MUTAGENESIS OF ASP-279</scope>
</reference>
<reference key="12">
    <citation type="journal article" date="2019" name="Am. J. Hum. Genet.">
        <title>Paralog studies augment gene discovery: DDX and DHX genes.</title>
        <authorList>
            <consortium name="University of Washington Center for Mendelian Genomics, Baylor-Hopkins Center for Mendelian Genomics, Telethon Undiagnosed Diseases Program"/>
            <person name="Paine I."/>
            <person name="Posey J.E."/>
            <person name="Grochowski C.M."/>
            <person name="Jhangiani S.N."/>
            <person name="Rosenheck S."/>
            <person name="Kleyner R."/>
            <person name="Marmorale T."/>
            <person name="Yoon M."/>
            <person name="Wang K."/>
            <person name="Robison R."/>
            <person name="Cappuccio G."/>
            <person name="Pinelli M."/>
            <person name="Magli A."/>
            <person name="Coban Akdemir Z."/>
            <person name="Hui J."/>
            <person name="Yeung W.L."/>
            <person name="Wong B.K.Y."/>
            <person name="Ortega L."/>
            <person name="Bekheirnia M.R."/>
            <person name="Bierhals T."/>
            <person name="Hempel M."/>
            <person name="Johannsen J."/>
            <person name="Santer R."/>
            <person name="Aktas D."/>
            <person name="Alikasifoglu M."/>
            <person name="Bozdogan S."/>
            <person name="Aydin H."/>
            <person name="Karaca E."/>
            <person name="Bayram Y."/>
            <person name="Ityel H."/>
            <person name="Dorschner M."/>
            <person name="White J.J."/>
            <person name="Wilichowski E."/>
            <person name="Wortmann S.B."/>
            <person name="Casella E.B."/>
            <person name="Kitajima J.P."/>
            <person name="Kok F."/>
            <person name="Monteiro F."/>
            <person name="Muzny D.M."/>
            <person name="Bamshad M."/>
            <person name="Gibbs R.A."/>
            <person name="Sutton V.R."/>
            <person name="Van Esch H."/>
            <person name="Brunetti-Pierri N."/>
            <person name="Hildebrandt F."/>
            <person name="Brautbar A."/>
            <person name="Van den Veyver I.B."/>
            <person name="Glass I."/>
            <person name="Lessel D."/>
            <person name="Lyon G.J."/>
            <person name="Lupski J.R."/>
        </authorList>
    </citation>
    <scope>VARIANTS 156-GLN--VAL-1143 DEL; SER-441 AND PRO-776</scope>
    <scope>TISSUE SPECIFICITY</scope>
</reference>
<evidence type="ECO:0000255" key="1">
    <source>
        <dbReference type="PROSITE-ProRule" id="PRU00541"/>
    </source>
</evidence>
<evidence type="ECO:0000255" key="2">
    <source>
        <dbReference type="PROSITE-ProRule" id="PRU00542"/>
    </source>
</evidence>
<evidence type="ECO:0000256" key="3">
    <source>
        <dbReference type="SAM" id="MobiDB-lite"/>
    </source>
</evidence>
<evidence type="ECO:0000269" key="4">
    <source>
    </source>
</evidence>
<evidence type="ECO:0000269" key="5">
    <source>
    </source>
</evidence>
<evidence type="ECO:0000269" key="6">
    <source>
    </source>
</evidence>
<evidence type="ECO:0000269" key="7">
    <source>
    </source>
</evidence>
<evidence type="ECO:0000305" key="8"/>
<evidence type="ECO:0000312" key="9">
    <source>
        <dbReference type="HGNC" id="HGNC:16719"/>
    </source>
</evidence>
<evidence type="ECO:0007744" key="10">
    <source>
    </source>
</evidence>
<evidence type="ECO:0007744" key="11">
    <source>
    </source>
</evidence>
<evidence type="ECO:0007744" key="12">
    <source>
    </source>
</evidence>
<evidence type="ECO:0007744" key="13">
    <source>
    </source>
</evidence>
<protein>
    <recommendedName>
        <fullName evidence="8">Probable ATP-dependent RNA helicase DHX34</fullName>
        <ecNumber>3.6.4.13</ecNumber>
    </recommendedName>
    <alternativeName>
        <fullName evidence="9">DEAH box protein 34</fullName>
    </alternativeName>
    <alternativeName>
        <fullName evidence="9">DExH-box helicase 34</fullName>
    </alternativeName>
</protein>
<organism>
    <name type="scientific">Homo sapiens</name>
    <name type="common">Human</name>
    <dbReference type="NCBI Taxonomy" id="9606"/>
    <lineage>
        <taxon>Eukaryota</taxon>
        <taxon>Metazoa</taxon>
        <taxon>Chordata</taxon>
        <taxon>Craniata</taxon>
        <taxon>Vertebrata</taxon>
        <taxon>Euteleostomi</taxon>
        <taxon>Mammalia</taxon>
        <taxon>Eutheria</taxon>
        <taxon>Euarchontoglires</taxon>
        <taxon>Primates</taxon>
        <taxon>Haplorrhini</taxon>
        <taxon>Catarrhini</taxon>
        <taxon>Hominidae</taxon>
        <taxon>Homo</taxon>
    </lineage>
</organism>
<feature type="chain" id="PRO_0000055166" description="Probable ATP-dependent RNA helicase DHX34">
    <location>
        <begin position="1"/>
        <end position="1143"/>
    </location>
</feature>
<feature type="domain" description="Helicase ATP-binding" evidence="1">
    <location>
        <begin position="172"/>
        <end position="332"/>
    </location>
</feature>
<feature type="domain" description="Helicase C-terminal" evidence="2">
    <location>
        <begin position="368"/>
        <end position="536"/>
    </location>
</feature>
<feature type="region of interest" description="Disordered" evidence="3">
    <location>
        <begin position="1"/>
        <end position="24"/>
    </location>
</feature>
<feature type="region of interest" description="Disordered" evidence="3">
    <location>
        <begin position="75"/>
        <end position="94"/>
    </location>
</feature>
<feature type="region of interest" description="Negatively regulates interaction with UPF1" evidence="5">
    <location>
        <begin position="701"/>
        <end position="955"/>
    </location>
</feature>
<feature type="region of interest" description="Disordered" evidence="3">
    <location>
        <begin position="724"/>
        <end position="766"/>
    </location>
</feature>
<feature type="region of interest" description="Required for phosphorylation of UPF1. Not required for interaction with UPF1" evidence="5">
    <location>
        <begin position="810"/>
        <end position="1143"/>
    </location>
</feature>
<feature type="region of interest" description="Required for the interaction with SMG1 and subsequent phosphorylation of UPF1" evidence="5">
    <location>
        <begin position="957"/>
        <end position="1143"/>
    </location>
</feature>
<feature type="short sequence motif" description="DEAH box">
    <location>
        <begin position="279"/>
        <end position="282"/>
    </location>
</feature>
<feature type="compositionally biased region" description="Basic and acidic residues" evidence="3">
    <location>
        <begin position="76"/>
        <end position="85"/>
    </location>
</feature>
<feature type="binding site" evidence="1">
    <location>
        <begin position="185"/>
        <end position="192"/>
    </location>
    <ligand>
        <name>ATP</name>
        <dbReference type="ChEBI" id="CHEBI:30616"/>
    </ligand>
</feature>
<feature type="modified residue" description="Phosphoserine" evidence="10 11 12 13">
    <location>
        <position position="749"/>
    </location>
</feature>
<feature type="modified residue" description="Phosphoserine" evidence="10 11 12 13">
    <location>
        <position position="750"/>
    </location>
</feature>
<feature type="sequence variant" id="VAR_057241" description="In dbSNP:rs12984558.">
    <original>R</original>
    <variation>W</variation>
    <location>
        <position position="17"/>
    </location>
</feature>
<feature type="sequence variant" id="VAR_057242" description="In dbSNP:rs8113564.">
    <original>G</original>
    <variation>D</variation>
    <location>
        <position position="117"/>
    </location>
</feature>
<feature type="sequence variant" id="VAR_083625" description="Found in a patient with a neurodevelopmental disorder; uncertain significance." evidence="6">
    <location>
        <begin position="156"/>
        <end position="1143"/>
    </location>
</feature>
<feature type="sequence variant" id="VAR_083626" description="Found in a patient with a neurodevelopmental disorder; uncertain significance; dbSNP:rs549149043." evidence="6">
    <original>N</original>
    <variation>S</variation>
    <location>
        <position position="441"/>
    </location>
</feature>
<feature type="sequence variant" id="VAR_083627" description="Found in a patient with a neurodevelopmental disorder; uncertain significance; dbSNP:rs764483792." evidence="6">
    <original>R</original>
    <variation>P</variation>
    <location>
        <position position="776"/>
    </location>
</feature>
<feature type="mutagenesis site" description="Results in interaction with ETF1/eRF1, GSPT1/eRF3a and GSPT2/eRF3b. Reduces UPF1 phosphorylation. No effect on mRNA binding or interaction with SMG1." evidence="4">
    <original>K</original>
    <variation>S</variation>
    <location>
        <position position="191"/>
    </location>
</feature>
<feature type="mutagenesis site" description="Results in interaction with ETF1/eRF1, GSPT1/eRF3a and GSPT2/eRF3b. Increases mRNA binding. Reduces UPF1 phosphorylation. Reduces ATPase activity. No effect on interaction with SMG1." evidence="4 5 7">
    <original>D</original>
    <variation>A</variation>
    <location>
        <position position="279"/>
    </location>
</feature>